<feature type="chain" id="PRO_0000309667" description="Hydroxyacylglutathione hydrolase">
    <location>
        <begin position="1"/>
        <end position="255"/>
    </location>
</feature>
<feature type="binding site" evidence="1">
    <location>
        <position position="56"/>
    </location>
    <ligand>
        <name>Zn(2+)</name>
        <dbReference type="ChEBI" id="CHEBI:29105"/>
        <label>1</label>
    </ligand>
</feature>
<feature type="binding site" evidence="1">
    <location>
        <position position="58"/>
    </location>
    <ligand>
        <name>Zn(2+)</name>
        <dbReference type="ChEBI" id="CHEBI:29105"/>
        <label>1</label>
    </ligand>
</feature>
<feature type="binding site" evidence="1">
    <location>
        <position position="60"/>
    </location>
    <ligand>
        <name>Zn(2+)</name>
        <dbReference type="ChEBI" id="CHEBI:29105"/>
        <label>2</label>
    </ligand>
</feature>
<feature type="binding site" evidence="1">
    <location>
        <position position="61"/>
    </location>
    <ligand>
        <name>Zn(2+)</name>
        <dbReference type="ChEBI" id="CHEBI:29105"/>
        <label>2</label>
    </ligand>
</feature>
<feature type="binding site" evidence="1">
    <location>
        <position position="114"/>
    </location>
    <ligand>
        <name>Zn(2+)</name>
        <dbReference type="ChEBI" id="CHEBI:29105"/>
        <label>1</label>
    </ligand>
</feature>
<feature type="binding site" evidence="1">
    <location>
        <position position="133"/>
    </location>
    <ligand>
        <name>Zn(2+)</name>
        <dbReference type="ChEBI" id="CHEBI:29105"/>
        <label>1</label>
    </ligand>
</feature>
<feature type="binding site" evidence="1">
    <location>
        <position position="133"/>
    </location>
    <ligand>
        <name>Zn(2+)</name>
        <dbReference type="ChEBI" id="CHEBI:29105"/>
        <label>2</label>
    </ligand>
</feature>
<feature type="binding site" evidence="1">
    <location>
        <position position="171"/>
    </location>
    <ligand>
        <name>Zn(2+)</name>
        <dbReference type="ChEBI" id="CHEBI:29105"/>
        <label>2</label>
    </ligand>
</feature>
<name>GLO2_NITWN</name>
<evidence type="ECO:0000255" key="1">
    <source>
        <dbReference type="HAMAP-Rule" id="MF_01374"/>
    </source>
</evidence>
<organism>
    <name type="scientific">Nitrobacter winogradskyi (strain ATCC 25391 / DSM 10237 / CIP 104748 / NCIMB 11846 / Nb-255)</name>
    <dbReference type="NCBI Taxonomy" id="323098"/>
    <lineage>
        <taxon>Bacteria</taxon>
        <taxon>Pseudomonadati</taxon>
        <taxon>Pseudomonadota</taxon>
        <taxon>Alphaproteobacteria</taxon>
        <taxon>Hyphomicrobiales</taxon>
        <taxon>Nitrobacteraceae</taxon>
        <taxon>Nitrobacter</taxon>
    </lineage>
</organism>
<keyword id="KW-0378">Hydrolase</keyword>
<keyword id="KW-0479">Metal-binding</keyword>
<keyword id="KW-1185">Reference proteome</keyword>
<keyword id="KW-0862">Zinc</keyword>
<reference key="1">
    <citation type="journal article" date="2006" name="Appl. Environ. Microbiol.">
        <title>Genome sequence of the chemolithoautotrophic nitrite-oxidizing bacterium Nitrobacter winogradskyi Nb-255.</title>
        <authorList>
            <person name="Starkenburg S.R."/>
            <person name="Chain P.S.G."/>
            <person name="Sayavedra-Soto L.A."/>
            <person name="Hauser L."/>
            <person name="Land M.L."/>
            <person name="Larimer F.W."/>
            <person name="Malfatti S.A."/>
            <person name="Klotz M.G."/>
            <person name="Bottomley P.J."/>
            <person name="Arp D.J."/>
            <person name="Hickey W.J."/>
        </authorList>
    </citation>
    <scope>NUCLEOTIDE SEQUENCE [LARGE SCALE GENOMIC DNA]</scope>
    <source>
        <strain>ATCC 25391 / DSM 10237 / CIP 104748 / NCIMB 11846 / Nb-255</strain>
    </source>
</reference>
<gene>
    <name evidence="1" type="primary">gloB</name>
    <name type="ordered locus">Nwi_0373</name>
</gene>
<comment type="function">
    <text evidence="1">Thiolesterase that catalyzes the hydrolysis of S-D-lactoyl-glutathione to form glutathione and D-lactic acid.</text>
</comment>
<comment type="catalytic activity">
    <reaction evidence="1">
        <text>an S-(2-hydroxyacyl)glutathione + H2O = a 2-hydroxy carboxylate + glutathione + H(+)</text>
        <dbReference type="Rhea" id="RHEA:21864"/>
        <dbReference type="ChEBI" id="CHEBI:15377"/>
        <dbReference type="ChEBI" id="CHEBI:15378"/>
        <dbReference type="ChEBI" id="CHEBI:57925"/>
        <dbReference type="ChEBI" id="CHEBI:58896"/>
        <dbReference type="ChEBI" id="CHEBI:71261"/>
        <dbReference type="EC" id="3.1.2.6"/>
    </reaction>
</comment>
<comment type="cofactor">
    <cofactor evidence="1">
        <name>Zn(2+)</name>
        <dbReference type="ChEBI" id="CHEBI:29105"/>
    </cofactor>
    <text evidence="1">Binds 2 Zn(2+) ions per subunit.</text>
</comment>
<comment type="pathway">
    <text evidence="1">Secondary metabolite metabolism; methylglyoxal degradation; (R)-lactate from methylglyoxal: step 2/2.</text>
</comment>
<comment type="subunit">
    <text evidence="1">Monomer.</text>
</comment>
<comment type="similarity">
    <text evidence="1">Belongs to the metallo-beta-lactamase superfamily. Glyoxalase II family.</text>
</comment>
<accession>Q3SVQ1</accession>
<protein>
    <recommendedName>
        <fullName evidence="1">Hydroxyacylglutathione hydrolase</fullName>
        <ecNumber evidence="1">3.1.2.6</ecNumber>
    </recommendedName>
    <alternativeName>
        <fullName evidence="1">Glyoxalase II</fullName>
        <shortName evidence="1">Glx II</shortName>
    </alternativeName>
</protein>
<dbReference type="EC" id="3.1.2.6" evidence="1"/>
<dbReference type="EMBL" id="CP000115">
    <property type="protein sequence ID" value="ABA03640.1"/>
    <property type="molecule type" value="Genomic_DNA"/>
</dbReference>
<dbReference type="RefSeq" id="WP_011313704.1">
    <property type="nucleotide sequence ID" value="NC_007406.1"/>
</dbReference>
<dbReference type="SMR" id="Q3SVQ1"/>
<dbReference type="STRING" id="323098.Nwi_0373"/>
<dbReference type="KEGG" id="nwi:Nwi_0373"/>
<dbReference type="eggNOG" id="COG0491">
    <property type="taxonomic scope" value="Bacteria"/>
</dbReference>
<dbReference type="HOGENOM" id="CLU_030571_4_1_5"/>
<dbReference type="OrthoDB" id="9802248at2"/>
<dbReference type="UniPathway" id="UPA00619">
    <property type="reaction ID" value="UER00676"/>
</dbReference>
<dbReference type="Proteomes" id="UP000002531">
    <property type="component" value="Chromosome"/>
</dbReference>
<dbReference type="GO" id="GO:0004416">
    <property type="term" value="F:hydroxyacylglutathione hydrolase activity"/>
    <property type="evidence" value="ECO:0007669"/>
    <property type="project" value="UniProtKB-UniRule"/>
</dbReference>
<dbReference type="GO" id="GO:0046872">
    <property type="term" value="F:metal ion binding"/>
    <property type="evidence" value="ECO:0007669"/>
    <property type="project" value="UniProtKB-KW"/>
</dbReference>
<dbReference type="GO" id="GO:0019243">
    <property type="term" value="P:methylglyoxal catabolic process to D-lactate via S-lactoyl-glutathione"/>
    <property type="evidence" value="ECO:0007669"/>
    <property type="project" value="InterPro"/>
</dbReference>
<dbReference type="CDD" id="cd07723">
    <property type="entry name" value="hydroxyacylglutathione_hydrolase_MBL-fold"/>
    <property type="match status" value="1"/>
</dbReference>
<dbReference type="Gene3D" id="3.60.15.10">
    <property type="entry name" value="Ribonuclease Z/Hydroxyacylglutathione hydrolase-like"/>
    <property type="match status" value="1"/>
</dbReference>
<dbReference type="HAMAP" id="MF_01374">
    <property type="entry name" value="Glyoxalase_2"/>
    <property type="match status" value="1"/>
</dbReference>
<dbReference type="InterPro" id="IPR035680">
    <property type="entry name" value="Clx_II_MBL"/>
</dbReference>
<dbReference type="InterPro" id="IPR050110">
    <property type="entry name" value="Glyoxalase_II_hydrolase"/>
</dbReference>
<dbReference type="InterPro" id="IPR032282">
    <property type="entry name" value="HAGH_C"/>
</dbReference>
<dbReference type="InterPro" id="IPR017782">
    <property type="entry name" value="Hydroxyacylglutathione_Hdrlase"/>
</dbReference>
<dbReference type="InterPro" id="IPR001279">
    <property type="entry name" value="Metallo-B-lactamas"/>
</dbReference>
<dbReference type="InterPro" id="IPR036866">
    <property type="entry name" value="RibonucZ/Hydroxyglut_hydro"/>
</dbReference>
<dbReference type="NCBIfam" id="TIGR03413">
    <property type="entry name" value="GSH_gloB"/>
    <property type="match status" value="1"/>
</dbReference>
<dbReference type="PANTHER" id="PTHR43705">
    <property type="entry name" value="HYDROXYACYLGLUTATHIONE HYDROLASE"/>
    <property type="match status" value="1"/>
</dbReference>
<dbReference type="PANTHER" id="PTHR43705:SF1">
    <property type="entry name" value="HYDROXYACYLGLUTATHIONE HYDROLASE GLOB"/>
    <property type="match status" value="1"/>
</dbReference>
<dbReference type="Pfam" id="PF16123">
    <property type="entry name" value="HAGH_C"/>
    <property type="match status" value="1"/>
</dbReference>
<dbReference type="Pfam" id="PF00753">
    <property type="entry name" value="Lactamase_B"/>
    <property type="match status" value="1"/>
</dbReference>
<dbReference type="PIRSF" id="PIRSF005457">
    <property type="entry name" value="Glx"/>
    <property type="match status" value="1"/>
</dbReference>
<dbReference type="SMART" id="SM00849">
    <property type="entry name" value="Lactamase_B"/>
    <property type="match status" value="1"/>
</dbReference>
<dbReference type="SUPFAM" id="SSF56281">
    <property type="entry name" value="Metallo-hydrolase/oxidoreductase"/>
    <property type="match status" value="1"/>
</dbReference>
<proteinExistence type="inferred from homology"/>
<sequence>MTADIRLFTCLTDNFGVLIHDPATGATAAIDAPEAEPVIQALDREGWVLTDILITHHHSDHVGGVAELKRKYACRVVAPHDRSAEIANVDLRVGQGDIIKVGTLLGRVLETPGHTLDHVSYVFDDEKVVFAADTLFSIGCGRVFEGTYPMMWDSLLKLRALPDSFRLYCGHEYTDSNIKFALTIEPNNPVLKARAEEVTRLRAEGRPTVPTLMGEEKKANVFLRADDPAVAAGVHMKGASGVEVFAELRERKNKS</sequence>